<dbReference type="EC" id="6.1.1.4" evidence="1"/>
<dbReference type="EMBL" id="CP000542">
    <property type="protein sequence ID" value="ABM56847.1"/>
    <property type="molecule type" value="Genomic_DNA"/>
</dbReference>
<dbReference type="RefSeq" id="WP_011808858.1">
    <property type="nucleotide sequence ID" value="NC_008786.1"/>
</dbReference>
<dbReference type="SMR" id="A1WGU0"/>
<dbReference type="STRING" id="391735.Veis_1071"/>
<dbReference type="GeneID" id="76459745"/>
<dbReference type="KEGG" id="vei:Veis_1071"/>
<dbReference type="eggNOG" id="COG0495">
    <property type="taxonomic scope" value="Bacteria"/>
</dbReference>
<dbReference type="HOGENOM" id="CLU_004427_0_0_4"/>
<dbReference type="OrthoDB" id="9810365at2"/>
<dbReference type="Proteomes" id="UP000000374">
    <property type="component" value="Chromosome"/>
</dbReference>
<dbReference type="GO" id="GO:0005829">
    <property type="term" value="C:cytosol"/>
    <property type="evidence" value="ECO:0007669"/>
    <property type="project" value="TreeGrafter"/>
</dbReference>
<dbReference type="GO" id="GO:0002161">
    <property type="term" value="F:aminoacyl-tRNA deacylase activity"/>
    <property type="evidence" value="ECO:0007669"/>
    <property type="project" value="InterPro"/>
</dbReference>
<dbReference type="GO" id="GO:0005524">
    <property type="term" value="F:ATP binding"/>
    <property type="evidence" value="ECO:0007669"/>
    <property type="project" value="UniProtKB-UniRule"/>
</dbReference>
<dbReference type="GO" id="GO:0004823">
    <property type="term" value="F:leucine-tRNA ligase activity"/>
    <property type="evidence" value="ECO:0007669"/>
    <property type="project" value="UniProtKB-UniRule"/>
</dbReference>
<dbReference type="GO" id="GO:0006429">
    <property type="term" value="P:leucyl-tRNA aminoacylation"/>
    <property type="evidence" value="ECO:0007669"/>
    <property type="project" value="UniProtKB-UniRule"/>
</dbReference>
<dbReference type="CDD" id="cd07958">
    <property type="entry name" value="Anticodon_Ia_Leu_BEm"/>
    <property type="match status" value="1"/>
</dbReference>
<dbReference type="CDD" id="cd00812">
    <property type="entry name" value="LeuRS_core"/>
    <property type="match status" value="1"/>
</dbReference>
<dbReference type="FunFam" id="1.10.730.10:FF:000002">
    <property type="entry name" value="Leucine--tRNA ligase"/>
    <property type="match status" value="1"/>
</dbReference>
<dbReference type="FunFam" id="3.40.50.620:FF:000003">
    <property type="entry name" value="Leucine--tRNA ligase"/>
    <property type="match status" value="1"/>
</dbReference>
<dbReference type="FunFam" id="3.40.50.620:FF:000056">
    <property type="entry name" value="Leucine--tRNA ligase"/>
    <property type="match status" value="1"/>
</dbReference>
<dbReference type="FunFam" id="3.90.740.10:FF:000012">
    <property type="entry name" value="Leucine--tRNA ligase"/>
    <property type="match status" value="1"/>
</dbReference>
<dbReference type="Gene3D" id="2.20.28.290">
    <property type="match status" value="1"/>
</dbReference>
<dbReference type="Gene3D" id="3.10.20.590">
    <property type="match status" value="1"/>
</dbReference>
<dbReference type="Gene3D" id="3.40.50.620">
    <property type="entry name" value="HUPs"/>
    <property type="match status" value="2"/>
</dbReference>
<dbReference type="Gene3D" id="1.10.730.10">
    <property type="entry name" value="Isoleucyl-tRNA Synthetase, Domain 1"/>
    <property type="match status" value="1"/>
</dbReference>
<dbReference type="HAMAP" id="MF_00049_B">
    <property type="entry name" value="Leu_tRNA_synth_B"/>
    <property type="match status" value="1"/>
</dbReference>
<dbReference type="InterPro" id="IPR001412">
    <property type="entry name" value="aa-tRNA-synth_I_CS"/>
</dbReference>
<dbReference type="InterPro" id="IPR002302">
    <property type="entry name" value="Leu-tRNA-ligase"/>
</dbReference>
<dbReference type="InterPro" id="IPR025709">
    <property type="entry name" value="Leu_tRNA-synth_edit"/>
</dbReference>
<dbReference type="InterPro" id="IPR013155">
    <property type="entry name" value="M/V/L/I-tRNA-synth_anticd-bd"/>
</dbReference>
<dbReference type="InterPro" id="IPR015413">
    <property type="entry name" value="Methionyl/Leucyl_tRNA_Synth"/>
</dbReference>
<dbReference type="InterPro" id="IPR014729">
    <property type="entry name" value="Rossmann-like_a/b/a_fold"/>
</dbReference>
<dbReference type="InterPro" id="IPR009080">
    <property type="entry name" value="tRNAsynth_Ia_anticodon-bd"/>
</dbReference>
<dbReference type="InterPro" id="IPR009008">
    <property type="entry name" value="Val/Leu/Ile-tRNA-synth_edit"/>
</dbReference>
<dbReference type="NCBIfam" id="TIGR00396">
    <property type="entry name" value="leuS_bact"/>
    <property type="match status" value="1"/>
</dbReference>
<dbReference type="PANTHER" id="PTHR43740:SF2">
    <property type="entry name" value="LEUCINE--TRNA LIGASE, MITOCHONDRIAL"/>
    <property type="match status" value="1"/>
</dbReference>
<dbReference type="PANTHER" id="PTHR43740">
    <property type="entry name" value="LEUCYL-TRNA SYNTHETASE"/>
    <property type="match status" value="1"/>
</dbReference>
<dbReference type="Pfam" id="PF08264">
    <property type="entry name" value="Anticodon_1"/>
    <property type="match status" value="1"/>
</dbReference>
<dbReference type="Pfam" id="PF13603">
    <property type="entry name" value="tRNA-synt_1_2"/>
    <property type="match status" value="1"/>
</dbReference>
<dbReference type="Pfam" id="PF09334">
    <property type="entry name" value="tRNA-synt_1g"/>
    <property type="match status" value="1"/>
</dbReference>
<dbReference type="PRINTS" id="PR00985">
    <property type="entry name" value="TRNASYNTHLEU"/>
</dbReference>
<dbReference type="SUPFAM" id="SSF47323">
    <property type="entry name" value="Anticodon-binding domain of a subclass of class I aminoacyl-tRNA synthetases"/>
    <property type="match status" value="1"/>
</dbReference>
<dbReference type="SUPFAM" id="SSF52374">
    <property type="entry name" value="Nucleotidylyl transferase"/>
    <property type="match status" value="1"/>
</dbReference>
<dbReference type="SUPFAM" id="SSF50677">
    <property type="entry name" value="ValRS/IleRS/LeuRS editing domain"/>
    <property type="match status" value="1"/>
</dbReference>
<dbReference type="PROSITE" id="PS00178">
    <property type="entry name" value="AA_TRNA_LIGASE_I"/>
    <property type="match status" value="1"/>
</dbReference>
<reference key="1">
    <citation type="submission" date="2006-12" db="EMBL/GenBank/DDBJ databases">
        <title>Complete sequence of chromosome 1 of Verminephrobacter eiseniae EF01-2.</title>
        <authorList>
            <person name="Copeland A."/>
            <person name="Lucas S."/>
            <person name="Lapidus A."/>
            <person name="Barry K."/>
            <person name="Detter J.C."/>
            <person name="Glavina del Rio T."/>
            <person name="Dalin E."/>
            <person name="Tice H."/>
            <person name="Pitluck S."/>
            <person name="Chertkov O."/>
            <person name="Brettin T."/>
            <person name="Bruce D."/>
            <person name="Han C."/>
            <person name="Tapia R."/>
            <person name="Gilna P."/>
            <person name="Schmutz J."/>
            <person name="Larimer F."/>
            <person name="Land M."/>
            <person name="Hauser L."/>
            <person name="Kyrpides N."/>
            <person name="Kim E."/>
            <person name="Stahl D."/>
            <person name="Richardson P."/>
        </authorList>
    </citation>
    <scope>NUCLEOTIDE SEQUENCE [LARGE SCALE GENOMIC DNA]</scope>
    <source>
        <strain>EF01-2</strain>
    </source>
</reference>
<comment type="catalytic activity">
    <reaction evidence="1">
        <text>tRNA(Leu) + L-leucine + ATP = L-leucyl-tRNA(Leu) + AMP + diphosphate</text>
        <dbReference type="Rhea" id="RHEA:11688"/>
        <dbReference type="Rhea" id="RHEA-COMP:9613"/>
        <dbReference type="Rhea" id="RHEA-COMP:9622"/>
        <dbReference type="ChEBI" id="CHEBI:30616"/>
        <dbReference type="ChEBI" id="CHEBI:33019"/>
        <dbReference type="ChEBI" id="CHEBI:57427"/>
        <dbReference type="ChEBI" id="CHEBI:78442"/>
        <dbReference type="ChEBI" id="CHEBI:78494"/>
        <dbReference type="ChEBI" id="CHEBI:456215"/>
        <dbReference type="EC" id="6.1.1.4"/>
    </reaction>
</comment>
<comment type="subcellular location">
    <subcellularLocation>
        <location evidence="1">Cytoplasm</location>
    </subcellularLocation>
</comment>
<comment type="similarity">
    <text evidence="1">Belongs to the class-I aminoacyl-tRNA synthetase family.</text>
</comment>
<gene>
    <name evidence="1" type="primary">leuS</name>
    <name type="ordered locus">Veis_1071</name>
</gene>
<proteinExistence type="inferred from homology"/>
<sequence length="907" mass="101177">MQDKYSPQDIERAAQDDWRARDAYRVTQDAGKKKFYACSMLPYPSGKLHMGHVRNYTINDMLTRYLRMNGYNVLMPMGWDAFGLPAENAAIKNGMPPARWTRENIAYMKQQMQALGLAIDWSRELATCDPGYYKWNQWLFLKMLDKGIAYRKTQVVNWDPVDQTVLANEQVNEGKGWRTGAVVEKREIPGYYLKITDYAEELLAFVTDDRLPGWPERVKLMQENWIGKSEGLRFAFPHDVRGDDGALIGGGRLYVFTTRADTIMGVTFCAVAPEHPLASHAAKSNPALAAFIDECRSGGTTEAALATQEKKGLRTGLYVTHPLTDEPLEVWVGNYVLMGYGDGAVMGVPAHDERDFAFALKYGIEIRQVVLVDGEHFDYRRWQDWYGDKQRGVTINSDSFSGLHHKEAVQAVAHVLEQKGLGEKKTTWRLRDWGVSRQRYWGTPIPIIHCDQHGAVPVPEKDLPVVLPQDCIPDGTGNPLHSHQGFHAGVTCPVCGKSARRETDTMDTFVDSAWYFMRYCDPKNDQAMVAEGTDYWMRDPQQATGGSGMDQYIGGIEHAILHLLYARFWTKVMRDLGLVKVDEPFNRLLTQGMVLNHIYSRRNDNGGREYFWPQDVEQVHDAAGKIIGARLIRAVGDWPAGSAIDYEGMGTMSKSRNNGVDPQELIGKYGADTARLHTMFTAPPEAALEWNDAAVEGSHRFLRRVWNFGLQLHAAGMTAASASLAGAGAPQTRNPPAFGKPAKALRREIHQLLRQVDYDYQRMQYNTVVSGAMKMLNALENFKASDPASQASDPLALTEGFGILLRCLYPVTPHIAHSLWRDLGYAAAVGELLDAPWPQVDGQALVQDEIELMLQINGKLRGSILVPAQASQAAIERIARASPAALAAGAVPKRVIVVPGRLVNLVF</sequence>
<evidence type="ECO:0000255" key="1">
    <source>
        <dbReference type="HAMAP-Rule" id="MF_00049"/>
    </source>
</evidence>
<name>SYL_VEREI</name>
<organism>
    <name type="scientific">Verminephrobacter eiseniae (strain EF01-2)</name>
    <dbReference type="NCBI Taxonomy" id="391735"/>
    <lineage>
        <taxon>Bacteria</taxon>
        <taxon>Pseudomonadati</taxon>
        <taxon>Pseudomonadota</taxon>
        <taxon>Betaproteobacteria</taxon>
        <taxon>Burkholderiales</taxon>
        <taxon>Comamonadaceae</taxon>
        <taxon>Verminephrobacter</taxon>
    </lineage>
</organism>
<feature type="chain" id="PRO_1000009460" description="Leucine--tRNA ligase">
    <location>
        <begin position="1"/>
        <end position="907"/>
    </location>
</feature>
<feature type="short sequence motif" description="'HIGH' region">
    <location>
        <begin position="42"/>
        <end position="52"/>
    </location>
</feature>
<feature type="short sequence motif" description="'KMSKS' region">
    <location>
        <begin position="651"/>
        <end position="655"/>
    </location>
</feature>
<feature type="binding site" evidence="1">
    <location>
        <position position="654"/>
    </location>
    <ligand>
        <name>ATP</name>
        <dbReference type="ChEBI" id="CHEBI:30616"/>
    </ligand>
</feature>
<keyword id="KW-0030">Aminoacyl-tRNA synthetase</keyword>
<keyword id="KW-0067">ATP-binding</keyword>
<keyword id="KW-0963">Cytoplasm</keyword>
<keyword id="KW-0436">Ligase</keyword>
<keyword id="KW-0547">Nucleotide-binding</keyword>
<keyword id="KW-0648">Protein biosynthesis</keyword>
<keyword id="KW-1185">Reference proteome</keyword>
<accession>A1WGU0</accession>
<protein>
    <recommendedName>
        <fullName evidence="1">Leucine--tRNA ligase</fullName>
        <ecNumber evidence="1">6.1.1.4</ecNumber>
    </recommendedName>
    <alternativeName>
        <fullName evidence="1">Leucyl-tRNA synthetase</fullName>
        <shortName evidence="1">LeuRS</shortName>
    </alternativeName>
</protein>